<reference key="1">
    <citation type="journal article" date="2008" name="J. Bacteriol.">
        <title>The complete genome sequence of Actinobacillus pleuropneumoniae L20 (serotype 5b).</title>
        <authorList>
            <person name="Foote S.J."/>
            <person name="Bosse J.T."/>
            <person name="Bouevitch A.B."/>
            <person name="Langford P.R."/>
            <person name="Young N.M."/>
            <person name="Nash J.H.E."/>
        </authorList>
    </citation>
    <scope>NUCLEOTIDE SEQUENCE [LARGE SCALE GENOMIC DNA]</scope>
    <source>
        <strain>L20</strain>
    </source>
</reference>
<protein>
    <recommendedName>
        <fullName evidence="1">Ubiquinone biosynthesis O-methyltransferase</fullName>
    </recommendedName>
    <alternativeName>
        <fullName evidence="1">2-polyprenyl-6-hydroxyphenol methylase</fullName>
        <ecNumber evidence="1">2.1.1.222</ecNumber>
    </alternativeName>
    <alternativeName>
        <fullName evidence="1">3-demethylubiquinone 3-O-methyltransferase</fullName>
        <ecNumber evidence="1">2.1.1.64</ecNumber>
    </alternativeName>
</protein>
<accession>A3MZ07</accession>
<comment type="function">
    <text evidence="1">O-methyltransferase that catalyzes the 2 O-methylation steps in the ubiquinone biosynthetic pathway.</text>
</comment>
<comment type="catalytic activity">
    <reaction evidence="1">
        <text>a 3-demethylubiquinol + S-adenosyl-L-methionine = a ubiquinol + S-adenosyl-L-homocysteine + H(+)</text>
        <dbReference type="Rhea" id="RHEA:44380"/>
        <dbReference type="Rhea" id="RHEA-COMP:9566"/>
        <dbReference type="Rhea" id="RHEA-COMP:10914"/>
        <dbReference type="ChEBI" id="CHEBI:15378"/>
        <dbReference type="ChEBI" id="CHEBI:17976"/>
        <dbReference type="ChEBI" id="CHEBI:57856"/>
        <dbReference type="ChEBI" id="CHEBI:59789"/>
        <dbReference type="ChEBI" id="CHEBI:84422"/>
        <dbReference type="EC" id="2.1.1.64"/>
    </reaction>
</comment>
<comment type="catalytic activity">
    <reaction evidence="1">
        <text>a 3-(all-trans-polyprenyl)benzene-1,2-diol + S-adenosyl-L-methionine = a 2-methoxy-6-(all-trans-polyprenyl)phenol + S-adenosyl-L-homocysteine + H(+)</text>
        <dbReference type="Rhea" id="RHEA:31411"/>
        <dbReference type="Rhea" id="RHEA-COMP:9550"/>
        <dbReference type="Rhea" id="RHEA-COMP:9551"/>
        <dbReference type="ChEBI" id="CHEBI:15378"/>
        <dbReference type="ChEBI" id="CHEBI:57856"/>
        <dbReference type="ChEBI" id="CHEBI:59789"/>
        <dbReference type="ChEBI" id="CHEBI:62729"/>
        <dbReference type="ChEBI" id="CHEBI:62731"/>
        <dbReference type="EC" id="2.1.1.222"/>
    </reaction>
</comment>
<comment type="pathway">
    <text evidence="1">Cofactor biosynthesis; ubiquinone biosynthesis.</text>
</comment>
<comment type="similarity">
    <text evidence="1">Belongs to the methyltransferase superfamily. UbiG/COQ3 family.</text>
</comment>
<feature type="chain" id="PRO_1000013886" description="Ubiquinone biosynthesis O-methyltransferase">
    <location>
        <begin position="1"/>
        <end position="234"/>
    </location>
</feature>
<feature type="binding site" evidence="1">
    <location>
        <position position="36"/>
    </location>
    <ligand>
        <name>S-adenosyl-L-methionine</name>
        <dbReference type="ChEBI" id="CHEBI:59789"/>
    </ligand>
</feature>
<feature type="binding site" evidence="1">
    <location>
        <position position="56"/>
    </location>
    <ligand>
        <name>S-adenosyl-L-methionine</name>
        <dbReference type="ChEBI" id="CHEBI:59789"/>
    </ligand>
</feature>
<feature type="binding site" evidence="1">
    <location>
        <position position="77"/>
    </location>
    <ligand>
        <name>S-adenosyl-L-methionine</name>
        <dbReference type="ChEBI" id="CHEBI:59789"/>
    </ligand>
</feature>
<feature type="binding site" evidence="1">
    <location>
        <position position="125"/>
    </location>
    <ligand>
        <name>S-adenosyl-L-methionine</name>
        <dbReference type="ChEBI" id="CHEBI:59789"/>
    </ligand>
</feature>
<dbReference type="EC" id="2.1.1.222" evidence="1"/>
<dbReference type="EC" id="2.1.1.64" evidence="1"/>
<dbReference type="EMBL" id="CP000569">
    <property type="protein sequence ID" value="ABN73393.1"/>
    <property type="molecule type" value="Genomic_DNA"/>
</dbReference>
<dbReference type="RefSeq" id="WP_005611396.1">
    <property type="nucleotide sequence ID" value="NC_009053.1"/>
</dbReference>
<dbReference type="SMR" id="A3MZ07"/>
<dbReference type="STRING" id="416269.APL_0285"/>
<dbReference type="EnsemblBacteria" id="ABN73393">
    <property type="protein sequence ID" value="ABN73393"/>
    <property type="gene ID" value="APL_0285"/>
</dbReference>
<dbReference type="KEGG" id="apl:APL_0285"/>
<dbReference type="eggNOG" id="COG2227">
    <property type="taxonomic scope" value="Bacteria"/>
</dbReference>
<dbReference type="HOGENOM" id="CLU_042432_5_0_6"/>
<dbReference type="UniPathway" id="UPA00232"/>
<dbReference type="Proteomes" id="UP000001432">
    <property type="component" value="Chromosome"/>
</dbReference>
<dbReference type="GO" id="GO:0102208">
    <property type="term" value="F:2-polyprenyl-6-hydroxyphenol methylase activity"/>
    <property type="evidence" value="ECO:0007669"/>
    <property type="project" value="UniProtKB-EC"/>
</dbReference>
<dbReference type="GO" id="GO:0061542">
    <property type="term" value="F:3-demethylubiquinol 3-O-methyltransferase activity"/>
    <property type="evidence" value="ECO:0007669"/>
    <property type="project" value="UniProtKB-UniRule"/>
</dbReference>
<dbReference type="GO" id="GO:0010420">
    <property type="term" value="F:polyprenyldihydroxybenzoate methyltransferase activity"/>
    <property type="evidence" value="ECO:0007669"/>
    <property type="project" value="InterPro"/>
</dbReference>
<dbReference type="GO" id="GO:0032259">
    <property type="term" value="P:methylation"/>
    <property type="evidence" value="ECO:0007669"/>
    <property type="project" value="UniProtKB-KW"/>
</dbReference>
<dbReference type="CDD" id="cd02440">
    <property type="entry name" value="AdoMet_MTases"/>
    <property type="match status" value="1"/>
</dbReference>
<dbReference type="FunFam" id="3.40.50.150:FF:000028">
    <property type="entry name" value="Ubiquinone biosynthesis O-methyltransferase"/>
    <property type="match status" value="1"/>
</dbReference>
<dbReference type="Gene3D" id="3.40.50.150">
    <property type="entry name" value="Vaccinia Virus protein VP39"/>
    <property type="match status" value="1"/>
</dbReference>
<dbReference type="HAMAP" id="MF_00472">
    <property type="entry name" value="UbiG"/>
    <property type="match status" value="1"/>
</dbReference>
<dbReference type="InterPro" id="IPR029063">
    <property type="entry name" value="SAM-dependent_MTases_sf"/>
</dbReference>
<dbReference type="InterPro" id="IPR010233">
    <property type="entry name" value="UbiG_MeTrfase"/>
</dbReference>
<dbReference type="NCBIfam" id="TIGR01983">
    <property type="entry name" value="UbiG"/>
    <property type="match status" value="1"/>
</dbReference>
<dbReference type="PANTHER" id="PTHR43464">
    <property type="entry name" value="METHYLTRANSFERASE"/>
    <property type="match status" value="1"/>
</dbReference>
<dbReference type="PANTHER" id="PTHR43464:SF19">
    <property type="entry name" value="UBIQUINONE BIOSYNTHESIS O-METHYLTRANSFERASE, MITOCHONDRIAL"/>
    <property type="match status" value="1"/>
</dbReference>
<dbReference type="Pfam" id="PF13489">
    <property type="entry name" value="Methyltransf_23"/>
    <property type="match status" value="1"/>
</dbReference>
<dbReference type="SUPFAM" id="SSF53335">
    <property type="entry name" value="S-adenosyl-L-methionine-dependent methyltransferases"/>
    <property type="match status" value="1"/>
</dbReference>
<sequence length="234" mass="26514">MNNIDQTELDKFEKMAATWWDPNGSFKPIHLLNPLRLDYIQQKANGLFGKKVLDVGCGGGILSEAMARAGATVTGIDMTTEPLEVARKHAEENGLSIDYRQTTIEDFVQNQTACHAEKFDVITCMEMLEHVPDPLSIIQSCKALLKPDGVLFFSTINRTLKAYMLVIIGAEYVLKMLPKGTHEFEKFIKPAELLNWCDMADLRCQEMKGYHFNPVTEKFWLNNDVSCNYIAMLK</sequence>
<name>UBIG_ACTP2</name>
<evidence type="ECO:0000255" key="1">
    <source>
        <dbReference type="HAMAP-Rule" id="MF_00472"/>
    </source>
</evidence>
<proteinExistence type="inferred from homology"/>
<gene>
    <name evidence="1" type="primary">ubiG</name>
    <name type="ordered locus">APL_0285</name>
</gene>
<organism>
    <name type="scientific">Actinobacillus pleuropneumoniae serotype 5b (strain L20)</name>
    <dbReference type="NCBI Taxonomy" id="416269"/>
    <lineage>
        <taxon>Bacteria</taxon>
        <taxon>Pseudomonadati</taxon>
        <taxon>Pseudomonadota</taxon>
        <taxon>Gammaproteobacteria</taxon>
        <taxon>Pasteurellales</taxon>
        <taxon>Pasteurellaceae</taxon>
        <taxon>Actinobacillus</taxon>
    </lineage>
</organism>
<keyword id="KW-0489">Methyltransferase</keyword>
<keyword id="KW-1185">Reference proteome</keyword>
<keyword id="KW-0949">S-adenosyl-L-methionine</keyword>
<keyword id="KW-0808">Transferase</keyword>
<keyword id="KW-0831">Ubiquinone biosynthesis</keyword>